<comment type="function">
    <text evidence="1">Key enzyme in the regulation of glycerol uptake and metabolism. Catalyzes the phosphorylation of glycerol to yield sn-glycerol 3-phosphate.</text>
</comment>
<comment type="catalytic activity">
    <reaction evidence="1">
        <text>glycerol + ATP = sn-glycerol 3-phosphate + ADP + H(+)</text>
        <dbReference type="Rhea" id="RHEA:21644"/>
        <dbReference type="ChEBI" id="CHEBI:15378"/>
        <dbReference type="ChEBI" id="CHEBI:17754"/>
        <dbReference type="ChEBI" id="CHEBI:30616"/>
        <dbReference type="ChEBI" id="CHEBI:57597"/>
        <dbReference type="ChEBI" id="CHEBI:456216"/>
        <dbReference type="EC" id="2.7.1.30"/>
    </reaction>
</comment>
<comment type="activity regulation">
    <text evidence="1">Activated by phosphorylation and inhibited by fructose 1,6-bisphosphate (FBP).</text>
</comment>
<comment type="pathway">
    <text evidence="1">Polyol metabolism; glycerol degradation via glycerol kinase pathway; sn-glycerol 3-phosphate from glycerol: step 1/1.</text>
</comment>
<comment type="subunit">
    <text evidence="1">Homotetramer and homodimer (in equilibrium).</text>
</comment>
<comment type="PTM">
    <text evidence="1">The phosphoenolpyruvate-dependent sugar phosphotransferase system (PTS), including enzyme I, and histidine-containing protein (HPr) are required for the phosphorylation, which leads to the activation of the enzyme.</text>
</comment>
<comment type="similarity">
    <text evidence="1">Belongs to the FGGY kinase family.</text>
</comment>
<feature type="chain" id="PRO_1000124206" description="Glycerol kinase">
    <location>
        <begin position="1"/>
        <end position="502"/>
    </location>
</feature>
<feature type="binding site" evidence="1">
    <location>
        <position position="14"/>
    </location>
    <ligand>
        <name>ADP</name>
        <dbReference type="ChEBI" id="CHEBI:456216"/>
    </ligand>
</feature>
<feature type="binding site" evidence="1">
    <location>
        <position position="14"/>
    </location>
    <ligand>
        <name>ATP</name>
        <dbReference type="ChEBI" id="CHEBI:30616"/>
    </ligand>
</feature>
<feature type="binding site" evidence="1">
    <location>
        <position position="14"/>
    </location>
    <ligand>
        <name>sn-glycerol 3-phosphate</name>
        <dbReference type="ChEBI" id="CHEBI:57597"/>
    </ligand>
</feature>
<feature type="binding site" evidence="1">
    <location>
        <position position="15"/>
    </location>
    <ligand>
        <name>ATP</name>
        <dbReference type="ChEBI" id="CHEBI:30616"/>
    </ligand>
</feature>
<feature type="binding site" evidence="1">
    <location>
        <position position="16"/>
    </location>
    <ligand>
        <name>ATP</name>
        <dbReference type="ChEBI" id="CHEBI:30616"/>
    </ligand>
</feature>
<feature type="binding site" evidence="1">
    <location>
        <position position="18"/>
    </location>
    <ligand>
        <name>ADP</name>
        <dbReference type="ChEBI" id="CHEBI:456216"/>
    </ligand>
</feature>
<feature type="binding site" evidence="1">
    <location>
        <position position="84"/>
    </location>
    <ligand>
        <name>glycerol</name>
        <dbReference type="ChEBI" id="CHEBI:17754"/>
    </ligand>
</feature>
<feature type="binding site" evidence="1">
    <location>
        <position position="84"/>
    </location>
    <ligand>
        <name>sn-glycerol 3-phosphate</name>
        <dbReference type="ChEBI" id="CHEBI:57597"/>
    </ligand>
</feature>
<feature type="binding site" evidence="1">
    <location>
        <position position="85"/>
    </location>
    <ligand>
        <name>glycerol</name>
        <dbReference type="ChEBI" id="CHEBI:17754"/>
    </ligand>
</feature>
<feature type="binding site" evidence="1">
    <location>
        <position position="85"/>
    </location>
    <ligand>
        <name>sn-glycerol 3-phosphate</name>
        <dbReference type="ChEBI" id="CHEBI:57597"/>
    </ligand>
</feature>
<feature type="binding site" evidence="1">
    <location>
        <position position="136"/>
    </location>
    <ligand>
        <name>glycerol</name>
        <dbReference type="ChEBI" id="CHEBI:17754"/>
    </ligand>
</feature>
<feature type="binding site" evidence="1">
    <location>
        <position position="136"/>
    </location>
    <ligand>
        <name>sn-glycerol 3-phosphate</name>
        <dbReference type="ChEBI" id="CHEBI:57597"/>
    </ligand>
</feature>
<feature type="binding site" evidence="1">
    <location>
        <position position="246"/>
    </location>
    <ligand>
        <name>glycerol</name>
        <dbReference type="ChEBI" id="CHEBI:17754"/>
    </ligand>
</feature>
<feature type="binding site" evidence="1">
    <location>
        <position position="246"/>
    </location>
    <ligand>
        <name>sn-glycerol 3-phosphate</name>
        <dbReference type="ChEBI" id="CHEBI:57597"/>
    </ligand>
</feature>
<feature type="binding site" evidence="1">
    <location>
        <position position="247"/>
    </location>
    <ligand>
        <name>glycerol</name>
        <dbReference type="ChEBI" id="CHEBI:17754"/>
    </ligand>
</feature>
<feature type="binding site" evidence="1">
    <location>
        <position position="268"/>
    </location>
    <ligand>
        <name>ADP</name>
        <dbReference type="ChEBI" id="CHEBI:456216"/>
    </ligand>
</feature>
<feature type="binding site" evidence="1">
    <location>
        <position position="268"/>
    </location>
    <ligand>
        <name>ATP</name>
        <dbReference type="ChEBI" id="CHEBI:30616"/>
    </ligand>
</feature>
<feature type="binding site" evidence="1">
    <location>
        <position position="311"/>
    </location>
    <ligand>
        <name>ADP</name>
        <dbReference type="ChEBI" id="CHEBI:456216"/>
    </ligand>
</feature>
<feature type="binding site" evidence="1">
    <location>
        <position position="311"/>
    </location>
    <ligand>
        <name>ATP</name>
        <dbReference type="ChEBI" id="CHEBI:30616"/>
    </ligand>
</feature>
<feature type="binding site" evidence="1">
    <location>
        <position position="315"/>
    </location>
    <ligand>
        <name>ATP</name>
        <dbReference type="ChEBI" id="CHEBI:30616"/>
    </ligand>
</feature>
<feature type="binding site" evidence="1">
    <location>
        <position position="412"/>
    </location>
    <ligand>
        <name>ADP</name>
        <dbReference type="ChEBI" id="CHEBI:456216"/>
    </ligand>
</feature>
<feature type="binding site" evidence="1">
    <location>
        <position position="412"/>
    </location>
    <ligand>
        <name>ATP</name>
        <dbReference type="ChEBI" id="CHEBI:30616"/>
    </ligand>
</feature>
<feature type="binding site" evidence="1">
    <location>
        <position position="416"/>
    </location>
    <ligand>
        <name>ADP</name>
        <dbReference type="ChEBI" id="CHEBI:456216"/>
    </ligand>
</feature>
<feature type="modified residue" description="Phosphohistidine; by HPr" evidence="1">
    <location>
        <position position="232"/>
    </location>
</feature>
<evidence type="ECO:0000255" key="1">
    <source>
        <dbReference type="HAMAP-Rule" id="MF_00186"/>
    </source>
</evidence>
<accession>B8ZQ22</accession>
<sequence length="502" mass="55877">MSQEKYIMAIDQGTTSSRAIIFNKKGEKVSSSQKEFTQIFPQAGWVEHNANEIWNSVQSVIAGAFIESGVKPNQIEAIGITNQRETTVVWDKKTGLPIYNAIVWQSRQTAPLAEQLKNQGYVEKFHEKTGLIIDAYFSATKVRWILDHVEGAQERAEKGELLFGTIDTWLVWKLTDGAAHVTDYSNAARTMLYNIKELKWDDEILEILNIPKAILPEVRSNSEIYGKTAPFHFYGGEVPISGMAGDQQAALFGQLAFEPGMVKNTYGTGSFIIMNTGEEMQLSENNLLTTIGYGINGKVYYALEGSIFIAGSAIQWLRDGLRMVENSPESEKYARDSHNNDEVYVVPAFTGLGAPYWNQNARGSVFGLTRGTSKEDFIKATLQSIAYQVRDIIDTMQVDTQTAIQVLKVDGGAAMNNFLMQFQADILGIDIARAKNLETTALGAAFLAGLSVGYWKDLDELKLLNETGELFEPSMNESRKEQLYKGWKKAVKATQVFAEVDD</sequence>
<protein>
    <recommendedName>
        <fullName evidence="1">Glycerol kinase</fullName>
        <ecNumber evidence="1">2.7.1.30</ecNumber>
    </recommendedName>
    <alternativeName>
        <fullName evidence="1">ATP:glycerol 3-phosphotransferase</fullName>
    </alternativeName>
    <alternativeName>
        <fullName evidence="1">Glycerokinase</fullName>
        <shortName evidence="1">GK</shortName>
    </alternativeName>
</protein>
<proteinExistence type="inferred from homology"/>
<keyword id="KW-0067">ATP-binding</keyword>
<keyword id="KW-0319">Glycerol metabolism</keyword>
<keyword id="KW-0418">Kinase</keyword>
<keyword id="KW-0547">Nucleotide-binding</keyword>
<keyword id="KW-0597">Phosphoprotein</keyword>
<keyword id="KW-0808">Transferase</keyword>
<reference key="1">
    <citation type="journal article" date="2009" name="J. Bacteriol.">
        <title>Role of conjugative elements in the evolution of the multidrug-resistant pandemic clone Streptococcus pneumoniae Spain23F ST81.</title>
        <authorList>
            <person name="Croucher N.J."/>
            <person name="Walker D."/>
            <person name="Romero P."/>
            <person name="Lennard N."/>
            <person name="Paterson G.K."/>
            <person name="Bason N.C."/>
            <person name="Mitchell A.M."/>
            <person name="Quail M.A."/>
            <person name="Andrew P.W."/>
            <person name="Parkhill J."/>
            <person name="Bentley S.D."/>
            <person name="Mitchell T.J."/>
        </authorList>
    </citation>
    <scope>NUCLEOTIDE SEQUENCE [LARGE SCALE GENOMIC DNA]</scope>
    <source>
        <strain>ATCC 700669 / Spain 23F-1</strain>
    </source>
</reference>
<gene>
    <name evidence="1" type="primary">glpK</name>
    <name type="ordered locus">SPN23F22200</name>
</gene>
<organism>
    <name type="scientific">Streptococcus pneumoniae (strain ATCC 700669 / Spain 23F-1)</name>
    <dbReference type="NCBI Taxonomy" id="561276"/>
    <lineage>
        <taxon>Bacteria</taxon>
        <taxon>Bacillati</taxon>
        <taxon>Bacillota</taxon>
        <taxon>Bacilli</taxon>
        <taxon>Lactobacillales</taxon>
        <taxon>Streptococcaceae</taxon>
        <taxon>Streptococcus</taxon>
    </lineage>
</organism>
<name>GLPK_STRPJ</name>
<dbReference type="EC" id="2.7.1.30" evidence="1"/>
<dbReference type="EMBL" id="FM211187">
    <property type="protein sequence ID" value="CAR69949.1"/>
    <property type="molecule type" value="Genomic_DNA"/>
</dbReference>
<dbReference type="RefSeq" id="WP_000076765.1">
    <property type="nucleotide sequence ID" value="NC_011900.1"/>
</dbReference>
<dbReference type="SMR" id="B8ZQ22"/>
<dbReference type="KEGG" id="sne:SPN23F22200"/>
<dbReference type="HOGENOM" id="CLU_009281_2_3_9"/>
<dbReference type="UniPathway" id="UPA00618">
    <property type="reaction ID" value="UER00672"/>
</dbReference>
<dbReference type="GO" id="GO:0005829">
    <property type="term" value="C:cytosol"/>
    <property type="evidence" value="ECO:0007669"/>
    <property type="project" value="TreeGrafter"/>
</dbReference>
<dbReference type="GO" id="GO:0005524">
    <property type="term" value="F:ATP binding"/>
    <property type="evidence" value="ECO:0007669"/>
    <property type="project" value="UniProtKB-UniRule"/>
</dbReference>
<dbReference type="GO" id="GO:0004370">
    <property type="term" value="F:glycerol kinase activity"/>
    <property type="evidence" value="ECO:0000250"/>
    <property type="project" value="UniProtKB"/>
</dbReference>
<dbReference type="GO" id="GO:0019563">
    <property type="term" value="P:glycerol catabolic process"/>
    <property type="evidence" value="ECO:0007669"/>
    <property type="project" value="UniProtKB-UniRule"/>
</dbReference>
<dbReference type="GO" id="GO:0006071">
    <property type="term" value="P:glycerol metabolic process"/>
    <property type="evidence" value="ECO:0000250"/>
    <property type="project" value="UniProtKB"/>
</dbReference>
<dbReference type="GO" id="GO:0006072">
    <property type="term" value="P:glycerol-3-phosphate metabolic process"/>
    <property type="evidence" value="ECO:0007669"/>
    <property type="project" value="InterPro"/>
</dbReference>
<dbReference type="CDD" id="cd07786">
    <property type="entry name" value="FGGY_EcGK_like"/>
    <property type="match status" value="1"/>
</dbReference>
<dbReference type="FunFam" id="3.30.420.40:FF:000007">
    <property type="entry name" value="Glycerol kinase"/>
    <property type="match status" value="1"/>
</dbReference>
<dbReference type="FunFam" id="3.30.420.40:FF:000008">
    <property type="entry name" value="Glycerol kinase"/>
    <property type="match status" value="1"/>
</dbReference>
<dbReference type="Gene3D" id="3.30.420.40">
    <property type="match status" value="2"/>
</dbReference>
<dbReference type="HAMAP" id="MF_00186">
    <property type="entry name" value="Glycerol_kin"/>
    <property type="match status" value="1"/>
</dbReference>
<dbReference type="InterPro" id="IPR043129">
    <property type="entry name" value="ATPase_NBD"/>
</dbReference>
<dbReference type="InterPro" id="IPR000577">
    <property type="entry name" value="Carb_kinase_FGGY"/>
</dbReference>
<dbReference type="InterPro" id="IPR018483">
    <property type="entry name" value="Carb_kinase_FGGY_CS"/>
</dbReference>
<dbReference type="InterPro" id="IPR018485">
    <property type="entry name" value="FGGY_C"/>
</dbReference>
<dbReference type="InterPro" id="IPR018484">
    <property type="entry name" value="FGGY_N"/>
</dbReference>
<dbReference type="InterPro" id="IPR005999">
    <property type="entry name" value="Glycerol_kin"/>
</dbReference>
<dbReference type="NCBIfam" id="TIGR01311">
    <property type="entry name" value="glycerol_kin"/>
    <property type="match status" value="1"/>
</dbReference>
<dbReference type="NCBIfam" id="NF000756">
    <property type="entry name" value="PRK00047.1"/>
    <property type="match status" value="1"/>
</dbReference>
<dbReference type="PANTHER" id="PTHR10196:SF69">
    <property type="entry name" value="GLYCEROL KINASE"/>
    <property type="match status" value="1"/>
</dbReference>
<dbReference type="PANTHER" id="PTHR10196">
    <property type="entry name" value="SUGAR KINASE"/>
    <property type="match status" value="1"/>
</dbReference>
<dbReference type="Pfam" id="PF02782">
    <property type="entry name" value="FGGY_C"/>
    <property type="match status" value="1"/>
</dbReference>
<dbReference type="Pfam" id="PF00370">
    <property type="entry name" value="FGGY_N"/>
    <property type="match status" value="1"/>
</dbReference>
<dbReference type="PIRSF" id="PIRSF000538">
    <property type="entry name" value="GlpK"/>
    <property type="match status" value="1"/>
</dbReference>
<dbReference type="SUPFAM" id="SSF53067">
    <property type="entry name" value="Actin-like ATPase domain"/>
    <property type="match status" value="2"/>
</dbReference>
<dbReference type="PROSITE" id="PS00933">
    <property type="entry name" value="FGGY_KINASES_1"/>
    <property type="match status" value="1"/>
</dbReference>
<dbReference type="PROSITE" id="PS00445">
    <property type="entry name" value="FGGY_KINASES_2"/>
    <property type="match status" value="1"/>
</dbReference>